<sequence length="264" mass="30480">MKQYLELMQKVLDEGTQKNDRTGTGTLSIFGHQMRFNLQDGFPLVTTKRCHLRSIIHELLWFLQGDTNIAYLHENNVTIWDEWADENGDLGPVYGKQWRAWPTPDGRHIDQITTVLNQLKNDPDSRRIIVSAWNVGELDKMALAPCHAFFQFYVADGKLSCQLYQRSCDVFLGLPFNIASYALLVHMMAQQCDLEVGDFVWTGGDTHLYSNHMDQTHLQLSREPRPLPKLIIKRKPESIFDYRFEDFEIEGYDPHPGIKAPVAI</sequence>
<proteinExistence type="inferred from homology"/>
<accession>A1AF39</accession>
<keyword id="KW-0963">Cytoplasm</keyword>
<keyword id="KW-0489">Methyltransferase</keyword>
<keyword id="KW-0545">Nucleotide biosynthesis</keyword>
<keyword id="KW-1185">Reference proteome</keyword>
<keyword id="KW-0808">Transferase</keyword>
<dbReference type="EC" id="2.1.1.45" evidence="1"/>
<dbReference type="EMBL" id="CP000468">
    <property type="protein sequence ID" value="ABJ02279.1"/>
    <property type="molecule type" value="Genomic_DNA"/>
</dbReference>
<dbReference type="RefSeq" id="WP_000816232.1">
    <property type="nucleotide sequence ID" value="NZ_CADILS010000010.1"/>
</dbReference>
<dbReference type="BMRB" id="A1AF39"/>
<dbReference type="SMR" id="A1AF39"/>
<dbReference type="GeneID" id="93779171"/>
<dbReference type="KEGG" id="ecv:APECO1_3678"/>
<dbReference type="HOGENOM" id="CLU_021669_0_0_6"/>
<dbReference type="UniPathway" id="UPA00575"/>
<dbReference type="Proteomes" id="UP000008216">
    <property type="component" value="Chromosome"/>
</dbReference>
<dbReference type="GO" id="GO:0005829">
    <property type="term" value="C:cytosol"/>
    <property type="evidence" value="ECO:0007669"/>
    <property type="project" value="TreeGrafter"/>
</dbReference>
<dbReference type="GO" id="GO:0004799">
    <property type="term" value="F:thymidylate synthase activity"/>
    <property type="evidence" value="ECO:0007669"/>
    <property type="project" value="UniProtKB-UniRule"/>
</dbReference>
<dbReference type="GO" id="GO:0006231">
    <property type="term" value="P:dTMP biosynthetic process"/>
    <property type="evidence" value="ECO:0007669"/>
    <property type="project" value="UniProtKB-UniRule"/>
</dbReference>
<dbReference type="GO" id="GO:0006235">
    <property type="term" value="P:dTTP biosynthetic process"/>
    <property type="evidence" value="ECO:0007669"/>
    <property type="project" value="UniProtKB-UniRule"/>
</dbReference>
<dbReference type="GO" id="GO:0032259">
    <property type="term" value="P:methylation"/>
    <property type="evidence" value="ECO:0007669"/>
    <property type="project" value="UniProtKB-KW"/>
</dbReference>
<dbReference type="CDD" id="cd00351">
    <property type="entry name" value="TS_Pyrimidine_HMase"/>
    <property type="match status" value="1"/>
</dbReference>
<dbReference type="FunFam" id="3.30.572.10:FF:000001">
    <property type="entry name" value="Thymidylate synthase"/>
    <property type="match status" value="1"/>
</dbReference>
<dbReference type="Gene3D" id="3.30.572.10">
    <property type="entry name" value="Thymidylate synthase/dCMP hydroxymethylase domain"/>
    <property type="match status" value="1"/>
</dbReference>
<dbReference type="HAMAP" id="MF_00008">
    <property type="entry name" value="Thymidy_synth_bact"/>
    <property type="match status" value="1"/>
</dbReference>
<dbReference type="InterPro" id="IPR045097">
    <property type="entry name" value="Thymidate_synth/dCMP_Mease"/>
</dbReference>
<dbReference type="InterPro" id="IPR023451">
    <property type="entry name" value="Thymidate_synth/dCMP_Mease_dom"/>
</dbReference>
<dbReference type="InterPro" id="IPR036926">
    <property type="entry name" value="Thymidate_synth/dCMP_Mease_sf"/>
</dbReference>
<dbReference type="InterPro" id="IPR000398">
    <property type="entry name" value="Thymidylate_synthase"/>
</dbReference>
<dbReference type="InterPro" id="IPR020940">
    <property type="entry name" value="Thymidylate_synthase_AS"/>
</dbReference>
<dbReference type="NCBIfam" id="NF002497">
    <property type="entry name" value="PRK01827.1-3"/>
    <property type="match status" value="1"/>
</dbReference>
<dbReference type="NCBIfam" id="NF002499">
    <property type="entry name" value="PRK01827.1-5"/>
    <property type="match status" value="1"/>
</dbReference>
<dbReference type="NCBIfam" id="TIGR03284">
    <property type="entry name" value="thym_sym"/>
    <property type="match status" value="2"/>
</dbReference>
<dbReference type="PANTHER" id="PTHR11548:SF9">
    <property type="entry name" value="THYMIDYLATE SYNTHASE"/>
    <property type="match status" value="1"/>
</dbReference>
<dbReference type="PANTHER" id="PTHR11548">
    <property type="entry name" value="THYMIDYLATE SYNTHASE 1"/>
    <property type="match status" value="1"/>
</dbReference>
<dbReference type="Pfam" id="PF00303">
    <property type="entry name" value="Thymidylat_synt"/>
    <property type="match status" value="1"/>
</dbReference>
<dbReference type="PRINTS" id="PR00108">
    <property type="entry name" value="THYMDSNTHASE"/>
</dbReference>
<dbReference type="SUPFAM" id="SSF55831">
    <property type="entry name" value="Thymidylate synthase/dCMP hydroxymethylase"/>
    <property type="match status" value="1"/>
</dbReference>
<dbReference type="PROSITE" id="PS00091">
    <property type="entry name" value="THYMIDYLATE_SYNTHASE"/>
    <property type="match status" value="1"/>
</dbReference>
<feature type="chain" id="PRO_1000000592" description="Thymidylate synthase">
    <location>
        <begin position="1"/>
        <end position="264"/>
    </location>
</feature>
<feature type="active site" description="Nucleophile" evidence="1">
    <location>
        <position position="146"/>
    </location>
</feature>
<feature type="binding site" description="in other chain" evidence="1">
    <location>
        <position position="21"/>
    </location>
    <ligand>
        <name>dUMP</name>
        <dbReference type="ChEBI" id="CHEBI:246422"/>
        <note>ligand shared between dimeric partners</note>
    </ligand>
</feature>
<feature type="binding site" evidence="1">
    <location>
        <position position="51"/>
    </location>
    <ligand>
        <name>(6R)-5,10-methylene-5,6,7,8-tetrahydrofolate</name>
        <dbReference type="ChEBI" id="CHEBI:15636"/>
    </ligand>
</feature>
<feature type="binding site" evidence="1">
    <location>
        <begin position="126"/>
        <end position="127"/>
    </location>
    <ligand>
        <name>dUMP</name>
        <dbReference type="ChEBI" id="CHEBI:246422"/>
        <note>ligand shared between dimeric partners</note>
    </ligand>
</feature>
<feature type="binding site" description="in other chain" evidence="1">
    <location>
        <begin position="166"/>
        <end position="169"/>
    </location>
    <ligand>
        <name>dUMP</name>
        <dbReference type="ChEBI" id="CHEBI:246422"/>
        <note>ligand shared between dimeric partners</note>
    </ligand>
</feature>
<feature type="binding site" evidence="1">
    <location>
        <position position="169"/>
    </location>
    <ligand>
        <name>(6R)-5,10-methylene-5,6,7,8-tetrahydrofolate</name>
        <dbReference type="ChEBI" id="CHEBI:15636"/>
    </ligand>
</feature>
<feature type="binding site" description="in other chain" evidence="1">
    <location>
        <position position="177"/>
    </location>
    <ligand>
        <name>dUMP</name>
        <dbReference type="ChEBI" id="CHEBI:246422"/>
        <note>ligand shared between dimeric partners</note>
    </ligand>
</feature>
<feature type="binding site" description="in other chain" evidence="1">
    <location>
        <begin position="207"/>
        <end position="209"/>
    </location>
    <ligand>
        <name>dUMP</name>
        <dbReference type="ChEBI" id="CHEBI:246422"/>
        <note>ligand shared between dimeric partners</note>
    </ligand>
</feature>
<feature type="binding site" evidence="1">
    <location>
        <position position="263"/>
    </location>
    <ligand>
        <name>(6R)-5,10-methylene-5,6,7,8-tetrahydrofolate</name>
        <dbReference type="ChEBI" id="CHEBI:15636"/>
    </ligand>
</feature>
<protein>
    <recommendedName>
        <fullName evidence="1">Thymidylate synthase</fullName>
        <shortName evidence="1">TS</shortName>
        <shortName evidence="1">TSase</shortName>
        <ecNumber evidence="1">2.1.1.45</ecNumber>
    </recommendedName>
</protein>
<reference key="1">
    <citation type="journal article" date="2007" name="J. Bacteriol.">
        <title>The genome sequence of avian pathogenic Escherichia coli strain O1:K1:H7 shares strong similarities with human extraintestinal pathogenic E. coli genomes.</title>
        <authorList>
            <person name="Johnson T.J."/>
            <person name="Kariyawasam S."/>
            <person name="Wannemuehler Y."/>
            <person name="Mangiamele P."/>
            <person name="Johnson S.J."/>
            <person name="Doetkott C."/>
            <person name="Skyberg J.A."/>
            <person name="Lynne A.M."/>
            <person name="Johnson J.R."/>
            <person name="Nolan L.K."/>
        </authorList>
    </citation>
    <scope>NUCLEOTIDE SEQUENCE [LARGE SCALE GENOMIC DNA]</scope>
</reference>
<name>TYSY_ECOK1</name>
<evidence type="ECO:0000255" key="1">
    <source>
        <dbReference type="HAMAP-Rule" id="MF_00008"/>
    </source>
</evidence>
<comment type="function">
    <text evidence="1">Catalyzes the reductive methylation of 2'-deoxyuridine-5'-monophosphate (dUMP) to 2'-deoxythymidine-5'-monophosphate (dTMP) while utilizing 5,10-methylenetetrahydrofolate (mTHF) as the methyl donor and reductant in the reaction, yielding dihydrofolate (DHF) as a by-product. This enzymatic reaction provides an intracellular de novo source of dTMP, an essential precursor for DNA biosynthesis.</text>
</comment>
<comment type="catalytic activity">
    <reaction evidence="1">
        <text>dUMP + (6R)-5,10-methylene-5,6,7,8-tetrahydrofolate = 7,8-dihydrofolate + dTMP</text>
        <dbReference type="Rhea" id="RHEA:12104"/>
        <dbReference type="ChEBI" id="CHEBI:15636"/>
        <dbReference type="ChEBI" id="CHEBI:57451"/>
        <dbReference type="ChEBI" id="CHEBI:63528"/>
        <dbReference type="ChEBI" id="CHEBI:246422"/>
        <dbReference type="EC" id="2.1.1.45"/>
    </reaction>
</comment>
<comment type="pathway">
    <text evidence="1">Pyrimidine metabolism; dTTP biosynthesis.</text>
</comment>
<comment type="subunit">
    <text evidence="1">Homodimer.</text>
</comment>
<comment type="subcellular location">
    <subcellularLocation>
        <location evidence="1">Cytoplasm</location>
    </subcellularLocation>
</comment>
<comment type="similarity">
    <text evidence="1">Belongs to the thymidylate synthase family. Bacterial-type ThyA subfamily.</text>
</comment>
<organism>
    <name type="scientific">Escherichia coli O1:K1 / APEC</name>
    <dbReference type="NCBI Taxonomy" id="405955"/>
    <lineage>
        <taxon>Bacteria</taxon>
        <taxon>Pseudomonadati</taxon>
        <taxon>Pseudomonadota</taxon>
        <taxon>Gammaproteobacteria</taxon>
        <taxon>Enterobacterales</taxon>
        <taxon>Enterobacteriaceae</taxon>
        <taxon>Escherichia</taxon>
    </lineage>
</organism>
<gene>
    <name evidence="1" type="primary">thyA</name>
    <name type="ordered locus">Ecok1_27850</name>
    <name type="ORF">APECO1_3678</name>
</gene>